<reference key="1">
    <citation type="journal article" date="2009" name="PLoS Genet.">
        <title>Organised genome dynamics in the Escherichia coli species results in highly diverse adaptive paths.</title>
        <authorList>
            <person name="Touchon M."/>
            <person name="Hoede C."/>
            <person name="Tenaillon O."/>
            <person name="Barbe V."/>
            <person name="Baeriswyl S."/>
            <person name="Bidet P."/>
            <person name="Bingen E."/>
            <person name="Bonacorsi S."/>
            <person name="Bouchier C."/>
            <person name="Bouvet O."/>
            <person name="Calteau A."/>
            <person name="Chiapello H."/>
            <person name="Clermont O."/>
            <person name="Cruveiller S."/>
            <person name="Danchin A."/>
            <person name="Diard M."/>
            <person name="Dossat C."/>
            <person name="Karoui M.E."/>
            <person name="Frapy E."/>
            <person name="Garry L."/>
            <person name="Ghigo J.M."/>
            <person name="Gilles A.M."/>
            <person name="Johnson J."/>
            <person name="Le Bouguenec C."/>
            <person name="Lescat M."/>
            <person name="Mangenot S."/>
            <person name="Martinez-Jehanne V."/>
            <person name="Matic I."/>
            <person name="Nassif X."/>
            <person name="Oztas S."/>
            <person name="Petit M.A."/>
            <person name="Pichon C."/>
            <person name="Rouy Z."/>
            <person name="Ruf C.S."/>
            <person name="Schneider D."/>
            <person name="Tourret J."/>
            <person name="Vacherie B."/>
            <person name="Vallenet D."/>
            <person name="Medigue C."/>
            <person name="Rocha E.P.C."/>
            <person name="Denamur E."/>
        </authorList>
    </citation>
    <scope>NUCLEOTIDE SEQUENCE [LARGE SCALE GENOMIC DNA]</scope>
    <source>
        <strain>ATCC 35469 / DSM 13698 / BCRC 15582 / CCUG 18766 / IAM 14443 / JCM 21226 / LMG 7866 / NBRC 102419 / NCTC 12128 / CDC 0568-73</strain>
    </source>
</reference>
<keyword id="KW-0131">Cell cycle</keyword>
<keyword id="KW-0132">Cell division</keyword>
<keyword id="KW-0963">Cytoplasm</keyword>
<keyword id="KW-0238">DNA-binding</keyword>
<name>MATP_ESCF3</name>
<comment type="function">
    <text evidence="1">Required for spatial organization of the terminus region of the chromosome (Ter macrodomain) during the cell cycle. Prevents early segregation of duplicated Ter macrodomains during cell division. Binds specifically to matS, which is a 13 bp signature motif repeated within the Ter macrodomain.</text>
</comment>
<comment type="subunit">
    <text evidence="1">Homodimer.</text>
</comment>
<comment type="subcellular location">
    <subcellularLocation>
        <location evidence="1">Cytoplasm</location>
    </subcellularLocation>
</comment>
<comment type="similarity">
    <text evidence="1">Belongs to the MatP family.</text>
</comment>
<feature type="chain" id="PRO_1000136671" description="Macrodomain Ter protein">
    <location>
        <begin position="1"/>
        <end position="151"/>
    </location>
</feature>
<organism>
    <name type="scientific">Escherichia fergusonii (strain ATCC 35469 / DSM 13698 / CCUG 18766 / IAM 14443 / JCM 21226 / LMG 7866 / NBRC 102419 / NCTC 12128 / CDC 0568-73)</name>
    <dbReference type="NCBI Taxonomy" id="585054"/>
    <lineage>
        <taxon>Bacteria</taxon>
        <taxon>Pseudomonadati</taxon>
        <taxon>Pseudomonadota</taxon>
        <taxon>Gammaproteobacteria</taxon>
        <taxon>Enterobacterales</taxon>
        <taxon>Enterobacteriaceae</taxon>
        <taxon>Escherichia</taxon>
    </lineage>
</organism>
<protein>
    <recommendedName>
        <fullName evidence="1">Macrodomain Ter protein</fullName>
    </recommendedName>
</protein>
<evidence type="ECO:0000255" key="1">
    <source>
        <dbReference type="HAMAP-Rule" id="MF_01073"/>
    </source>
</evidence>
<proteinExistence type="inferred from homology"/>
<accession>B7LNW6</accession>
<gene>
    <name evidence="1" type="primary">matP</name>
    <name type="ordered locus">EFER_1093</name>
</gene>
<sequence length="151" mass="17816">MKYQQLENLESGWKWKYLVKKHREGELITRYIEASAAQEAVDLLLTLENEPVKVNDWIAKHMNPALVNRMKQTIRARRKRHFNAEHQHTRKKSIDLEFMVWQRLAGLAHRRGKTLSETIVQLIEDAEHKEKYANTMSSLKQDLQALLGKND</sequence>
<dbReference type="EMBL" id="CU928158">
    <property type="protein sequence ID" value="CAQ88622.1"/>
    <property type="molecule type" value="Genomic_DNA"/>
</dbReference>
<dbReference type="RefSeq" id="WP_000877154.1">
    <property type="nucleotide sequence ID" value="NC_011740.1"/>
</dbReference>
<dbReference type="SMR" id="B7LNW6"/>
<dbReference type="GeneID" id="75057856"/>
<dbReference type="KEGG" id="efe:EFER_1093"/>
<dbReference type="HOGENOM" id="CLU_142157_0_0_6"/>
<dbReference type="OrthoDB" id="5814691at2"/>
<dbReference type="Proteomes" id="UP000000745">
    <property type="component" value="Chromosome"/>
</dbReference>
<dbReference type="GO" id="GO:0005737">
    <property type="term" value="C:cytoplasm"/>
    <property type="evidence" value="ECO:0007669"/>
    <property type="project" value="UniProtKB-SubCell"/>
</dbReference>
<dbReference type="GO" id="GO:0043565">
    <property type="term" value="F:sequence-specific DNA binding"/>
    <property type="evidence" value="ECO:0007669"/>
    <property type="project" value="UniProtKB-UniRule"/>
</dbReference>
<dbReference type="GO" id="GO:0051301">
    <property type="term" value="P:cell division"/>
    <property type="evidence" value="ECO:0007669"/>
    <property type="project" value="UniProtKB-UniRule"/>
</dbReference>
<dbReference type="GO" id="GO:0006355">
    <property type="term" value="P:regulation of DNA-templated transcription"/>
    <property type="evidence" value="ECO:0007669"/>
    <property type="project" value="InterPro"/>
</dbReference>
<dbReference type="FunFam" id="1.20.1270.380:FF:000001">
    <property type="entry name" value="Macrodomain Ter protein"/>
    <property type="match status" value="1"/>
</dbReference>
<dbReference type="Gene3D" id="1.20.1270.380">
    <property type="entry name" value="MatP, N-terminal domain"/>
    <property type="match status" value="1"/>
</dbReference>
<dbReference type="Gene3D" id="1.10.1220.10">
    <property type="entry name" value="Met repressor-like"/>
    <property type="match status" value="1"/>
</dbReference>
<dbReference type="HAMAP" id="MF_01073">
    <property type="entry name" value="MatP"/>
    <property type="match status" value="1"/>
</dbReference>
<dbReference type="InterPro" id="IPR013321">
    <property type="entry name" value="Arc_rbn_hlx_hlx"/>
</dbReference>
<dbReference type="InterPro" id="IPR009390">
    <property type="entry name" value="MatP"/>
</dbReference>
<dbReference type="InterPro" id="IPR035375">
    <property type="entry name" value="MatP_C"/>
</dbReference>
<dbReference type="InterPro" id="IPR035087">
    <property type="entry name" value="MatP_N"/>
</dbReference>
<dbReference type="InterPro" id="IPR038339">
    <property type="entry name" value="MatP_N_sf"/>
</dbReference>
<dbReference type="NCBIfam" id="NF003471">
    <property type="entry name" value="PRK05097.1"/>
    <property type="match status" value="1"/>
</dbReference>
<dbReference type="Pfam" id="PF06303">
    <property type="entry name" value="MatP"/>
    <property type="match status" value="1"/>
</dbReference>
<dbReference type="Pfam" id="PF17414">
    <property type="entry name" value="MatP_C"/>
    <property type="match status" value="1"/>
</dbReference>